<accession>A1L1R0</accession>
<dbReference type="EMBL" id="BC129178">
    <property type="protein sequence ID" value="AAI29179.1"/>
    <property type="molecule type" value="mRNA"/>
</dbReference>
<dbReference type="SMR" id="A1L1R0"/>
<dbReference type="FunCoup" id="A1L1R0">
    <property type="interactions" value="512"/>
</dbReference>
<dbReference type="STRING" id="7955.ENSDARP00000036580"/>
<dbReference type="iPTMnet" id="A1L1R0"/>
<dbReference type="PaxDb" id="7955-ENSDARP00000036580"/>
<dbReference type="AGR" id="ZFIN:ZDB-GENE-070112-1412"/>
<dbReference type="ZFIN" id="ZDB-GENE-070112-1412">
    <property type="gene designation" value="shq1"/>
</dbReference>
<dbReference type="eggNOG" id="KOG3247">
    <property type="taxonomic scope" value="Eukaryota"/>
</dbReference>
<dbReference type="InParanoid" id="A1L1R0"/>
<dbReference type="PhylomeDB" id="A1L1R0"/>
<dbReference type="PRO" id="PR:A1L1R0"/>
<dbReference type="Proteomes" id="UP000000437">
    <property type="component" value="Unplaced"/>
</dbReference>
<dbReference type="GO" id="GO:0005737">
    <property type="term" value="C:cytoplasm"/>
    <property type="evidence" value="ECO:0000318"/>
    <property type="project" value="GO_Central"/>
</dbReference>
<dbReference type="GO" id="GO:0005829">
    <property type="term" value="C:cytosol"/>
    <property type="evidence" value="ECO:0007669"/>
    <property type="project" value="UniProtKB-SubCell"/>
</dbReference>
<dbReference type="GO" id="GO:0005654">
    <property type="term" value="C:nucleoplasm"/>
    <property type="evidence" value="ECO:0000318"/>
    <property type="project" value="GO_Central"/>
</dbReference>
<dbReference type="GO" id="GO:0051082">
    <property type="term" value="F:unfolded protein binding"/>
    <property type="evidence" value="ECO:0000318"/>
    <property type="project" value="GO_Central"/>
</dbReference>
<dbReference type="GO" id="GO:0000493">
    <property type="term" value="P:box H/ACA snoRNP assembly"/>
    <property type="evidence" value="ECO:0000318"/>
    <property type="project" value="GO_Central"/>
</dbReference>
<dbReference type="GO" id="GO:0022618">
    <property type="term" value="P:protein-RNA complex assembly"/>
    <property type="evidence" value="ECO:0000250"/>
    <property type="project" value="UniProtKB"/>
</dbReference>
<dbReference type="FunFam" id="2.60.40.790:FF:000022">
    <property type="entry name" value="Protein SHQ1 homolog"/>
    <property type="match status" value="1"/>
</dbReference>
<dbReference type="Gene3D" id="2.60.40.790">
    <property type="match status" value="1"/>
</dbReference>
<dbReference type="InterPro" id="IPR007052">
    <property type="entry name" value="CS_dom"/>
</dbReference>
<dbReference type="InterPro" id="IPR008978">
    <property type="entry name" value="HSP20-like_chaperone"/>
</dbReference>
<dbReference type="InterPro" id="IPR039742">
    <property type="entry name" value="Shq1"/>
</dbReference>
<dbReference type="InterPro" id="IPR048696">
    <property type="entry name" value="SHQ1-like_CS"/>
</dbReference>
<dbReference type="InterPro" id="IPR007009">
    <property type="entry name" value="Shq1_C"/>
</dbReference>
<dbReference type="PANTHER" id="PTHR12967">
    <property type="entry name" value="PROTEIN SHQ1 HOMOLOG"/>
    <property type="match status" value="1"/>
</dbReference>
<dbReference type="PANTHER" id="PTHR12967:SF0">
    <property type="entry name" value="PROTEIN SHQ1 HOMOLOG"/>
    <property type="match status" value="1"/>
</dbReference>
<dbReference type="Pfam" id="PF04925">
    <property type="entry name" value="SHQ1"/>
    <property type="match status" value="1"/>
</dbReference>
<dbReference type="Pfam" id="PF21413">
    <property type="entry name" value="SHQ1-like_CS"/>
    <property type="match status" value="1"/>
</dbReference>
<dbReference type="SUPFAM" id="SSF49764">
    <property type="entry name" value="HSP20-like chaperones"/>
    <property type="match status" value="1"/>
</dbReference>
<dbReference type="PROSITE" id="PS51203">
    <property type="entry name" value="CS"/>
    <property type="match status" value="1"/>
</dbReference>
<protein>
    <recommendedName>
        <fullName>Protein SHQ1 homolog</fullName>
    </recommendedName>
</protein>
<reference key="1">
    <citation type="submission" date="2006-12" db="EMBL/GenBank/DDBJ databases">
        <authorList>
            <consortium name="NIH - Zebrafish Gene Collection (ZGC) project"/>
        </authorList>
    </citation>
    <scope>NUCLEOTIDE SEQUENCE [LARGE SCALE MRNA]</scope>
    <source>
        <tissue>Kidney</tissue>
    </source>
</reference>
<reference key="2">
    <citation type="journal article" date="2008" name="J. Proteome Res.">
        <title>Online automated in vivo zebrafish phosphoproteomics: from large-scale analysis down to a single embryo.</title>
        <authorList>
            <person name="Lemeer S."/>
            <person name="Pinkse M.W.H."/>
            <person name="Mohammed S."/>
            <person name="van Breukelen B."/>
            <person name="den Hertog J."/>
            <person name="Slijper M."/>
            <person name="Heck A.J.R."/>
        </authorList>
    </citation>
    <scope>PHOSPHORYLATION [LARGE SCALE ANALYSIS] AT THR-536 AND THR-540</scope>
    <scope>IDENTIFICATION BY MASS SPECTROMETRY</scope>
    <source>
        <tissue>Embryo</tissue>
    </source>
</reference>
<name>SHQ1_DANRE</name>
<gene>
    <name type="primary">shq1</name>
    <name type="ORF">zgc:158255</name>
</gene>
<keyword id="KW-0963">Cytoplasm</keyword>
<keyword id="KW-0539">Nucleus</keyword>
<keyword id="KW-0597">Phosphoprotein</keyword>
<keyword id="KW-1185">Reference proteome</keyword>
<organism>
    <name type="scientific">Danio rerio</name>
    <name type="common">Zebrafish</name>
    <name type="synonym">Brachydanio rerio</name>
    <dbReference type="NCBI Taxonomy" id="7955"/>
    <lineage>
        <taxon>Eukaryota</taxon>
        <taxon>Metazoa</taxon>
        <taxon>Chordata</taxon>
        <taxon>Craniata</taxon>
        <taxon>Vertebrata</taxon>
        <taxon>Euteleostomi</taxon>
        <taxon>Actinopterygii</taxon>
        <taxon>Neopterygii</taxon>
        <taxon>Teleostei</taxon>
        <taxon>Ostariophysi</taxon>
        <taxon>Cypriniformes</taxon>
        <taxon>Danionidae</taxon>
        <taxon>Danioninae</taxon>
        <taxon>Danio</taxon>
    </lineage>
</organism>
<comment type="function">
    <text evidence="1">Required for the quantitative accumulation of H/ACA ribonucleoproteins (RNPs).</text>
</comment>
<comment type="subcellular location">
    <subcellularLocation>
        <location evidence="1">Cytoplasm</location>
        <location evidence="1">Cytosol</location>
    </subcellularLocation>
    <subcellularLocation>
        <location evidence="1">Nucleus</location>
        <location evidence="1">Nucleoplasm</location>
    </subcellularLocation>
</comment>
<comment type="similarity">
    <text evidence="5">Belongs to the SHQ1 family.</text>
</comment>
<feature type="chain" id="PRO_0000302824" description="Protein SHQ1 homolog">
    <location>
        <begin position="1"/>
        <end position="585"/>
    </location>
</feature>
<feature type="domain" description="CS" evidence="2">
    <location>
        <begin position="1"/>
        <end position="89"/>
    </location>
</feature>
<feature type="region of interest" description="Disordered" evidence="3">
    <location>
        <begin position="421"/>
        <end position="461"/>
    </location>
</feature>
<feature type="region of interest" description="Disordered" evidence="3">
    <location>
        <begin position="495"/>
        <end position="541"/>
    </location>
</feature>
<feature type="region of interest" description="Disordered" evidence="3">
    <location>
        <begin position="556"/>
        <end position="585"/>
    </location>
</feature>
<feature type="compositionally biased region" description="Acidic residues" evidence="3">
    <location>
        <begin position="423"/>
        <end position="435"/>
    </location>
</feature>
<feature type="compositionally biased region" description="Acidic residues" evidence="3">
    <location>
        <begin position="442"/>
        <end position="453"/>
    </location>
</feature>
<feature type="compositionally biased region" description="Basic and acidic residues" evidence="3">
    <location>
        <begin position="506"/>
        <end position="536"/>
    </location>
</feature>
<feature type="compositionally biased region" description="Acidic residues" evidence="3">
    <location>
        <begin position="560"/>
        <end position="574"/>
    </location>
</feature>
<feature type="modified residue" description="Phosphothreonine" evidence="4">
    <location>
        <position position="536"/>
    </location>
</feature>
<feature type="modified residue" description="Phosphothreonine" evidence="4">
    <location>
        <position position="540"/>
    </location>
</feature>
<evidence type="ECO:0000250" key="1"/>
<evidence type="ECO:0000255" key="2">
    <source>
        <dbReference type="PROSITE-ProRule" id="PRU00547"/>
    </source>
</evidence>
<evidence type="ECO:0000256" key="3">
    <source>
        <dbReference type="SAM" id="MobiDB-lite"/>
    </source>
</evidence>
<evidence type="ECO:0000269" key="4">
    <source>
    </source>
</evidence>
<evidence type="ECO:0000305" key="5"/>
<proteinExistence type="evidence at protein level"/>
<sequence length="585" mass="67499">MITPAFELSQDADFLIVVIRVPYTRTSDFDIYIQEEEFKFYAKPYFLRLTLPGRIVEDGREKASFDIDKGLFTLHVPKETAGQHFEGLEMLTSLLAPKGSRSAKPLVEDSEACGEGCEEEDEEFDWQIEQEVYTEAPADTLKEYHKYGFGNLRSGVFSRLQEELNEVIDMKDPDNTNAELRRRNRLDTETAVFCADHYLVNLYEDKEEIRNLLKFKPWWRKLNPDPSAGYDISMTFTEEEREQMRRFTNRSYLLDKKARFHVWLGLVDIILAYVYDVRTTEGEHNVESAWTIRKLSGTLSWLETYHSVQDVLVSFGRRTYCYPLYRHFSLVTLAVKDAACIFQAGKACILKCLLAIHKIFRENDPAYILNDLYITDYCIWIQRVKSKHVLALAEPLNNAKLQKNHLELELEIIEQAAELAVKEEEEKDTESDTDDSSSSSGDSDDEDDSDEECPEKAAEKKQTAFKAHAEAVTEAFCVELQRGDGRLIEELGKRLEEELTIEEDVPQERRSASEGEGERRREHYHPHAAESERDTTKAATGKELLDVCLQRKPLRILNTEELDSDDDDDDDDDGDLRITVVDERG</sequence>